<accession>Q2G5A9</accession>
<proteinExistence type="inferred from homology"/>
<reference key="1">
    <citation type="submission" date="2006-01" db="EMBL/GenBank/DDBJ databases">
        <title>Complete sequence of Novosphingobium aromaticivorans DSM 12444.</title>
        <authorList>
            <consortium name="US DOE Joint Genome Institute"/>
            <person name="Copeland A."/>
            <person name="Lucas S."/>
            <person name="Lapidus A."/>
            <person name="Barry K."/>
            <person name="Detter J.C."/>
            <person name="Glavina T."/>
            <person name="Hammon N."/>
            <person name="Israni S."/>
            <person name="Pitluck S."/>
            <person name="Chain P."/>
            <person name="Malfatti S."/>
            <person name="Shin M."/>
            <person name="Vergez L."/>
            <person name="Schmutz J."/>
            <person name="Larimer F."/>
            <person name="Land M."/>
            <person name="Kyrpides N."/>
            <person name="Ivanova N."/>
            <person name="Fredrickson J."/>
            <person name="Balkwill D."/>
            <person name="Romine M.F."/>
            <person name="Richardson P."/>
        </authorList>
    </citation>
    <scope>NUCLEOTIDE SEQUENCE [LARGE SCALE GENOMIC DNA]</scope>
    <source>
        <strain>ATCC 700278 / DSM 12444 / CCUG 56034 / CIP 105152 / NBRC 16084 / F199</strain>
    </source>
</reference>
<organism>
    <name type="scientific">Novosphingobium aromaticivorans (strain ATCC 700278 / DSM 12444 / CCUG 56034 / CIP 105152 / NBRC 16084 / F199)</name>
    <dbReference type="NCBI Taxonomy" id="279238"/>
    <lineage>
        <taxon>Bacteria</taxon>
        <taxon>Pseudomonadati</taxon>
        <taxon>Pseudomonadota</taxon>
        <taxon>Alphaproteobacteria</taxon>
        <taxon>Sphingomonadales</taxon>
        <taxon>Sphingomonadaceae</taxon>
        <taxon>Novosphingobium</taxon>
    </lineage>
</organism>
<gene>
    <name evidence="1" type="primary">rpsK</name>
    <name type="ordered locus">Saro_2528</name>
</gene>
<feature type="chain" id="PRO_0000294813" description="Small ribosomal subunit protein uS11">
    <location>
        <begin position="1"/>
        <end position="129"/>
    </location>
</feature>
<protein>
    <recommendedName>
        <fullName evidence="1">Small ribosomal subunit protein uS11</fullName>
    </recommendedName>
    <alternativeName>
        <fullName evidence="2">30S ribosomal protein S11</fullName>
    </alternativeName>
</protein>
<comment type="function">
    <text evidence="1">Located on the platform of the 30S subunit, it bridges several disparate RNA helices of the 16S rRNA. Forms part of the Shine-Dalgarno cleft in the 70S ribosome.</text>
</comment>
<comment type="subunit">
    <text evidence="1">Part of the 30S ribosomal subunit. Interacts with proteins S7 and S18. Binds to IF-3.</text>
</comment>
<comment type="similarity">
    <text evidence="1">Belongs to the universal ribosomal protein uS11 family.</text>
</comment>
<name>RS11_NOVAD</name>
<evidence type="ECO:0000255" key="1">
    <source>
        <dbReference type="HAMAP-Rule" id="MF_01310"/>
    </source>
</evidence>
<evidence type="ECO:0000305" key="2"/>
<keyword id="KW-1185">Reference proteome</keyword>
<keyword id="KW-0687">Ribonucleoprotein</keyword>
<keyword id="KW-0689">Ribosomal protein</keyword>
<keyword id="KW-0694">RNA-binding</keyword>
<keyword id="KW-0699">rRNA-binding</keyword>
<dbReference type="EMBL" id="CP000248">
    <property type="protein sequence ID" value="ABD26964.1"/>
    <property type="molecule type" value="Genomic_DNA"/>
</dbReference>
<dbReference type="RefSeq" id="WP_011446170.1">
    <property type="nucleotide sequence ID" value="NC_007794.1"/>
</dbReference>
<dbReference type="SMR" id="Q2G5A9"/>
<dbReference type="STRING" id="279238.Saro_2528"/>
<dbReference type="KEGG" id="nar:Saro_2528"/>
<dbReference type="eggNOG" id="COG0100">
    <property type="taxonomic scope" value="Bacteria"/>
</dbReference>
<dbReference type="HOGENOM" id="CLU_072439_5_0_5"/>
<dbReference type="Proteomes" id="UP000009134">
    <property type="component" value="Chromosome"/>
</dbReference>
<dbReference type="GO" id="GO:1990904">
    <property type="term" value="C:ribonucleoprotein complex"/>
    <property type="evidence" value="ECO:0007669"/>
    <property type="project" value="UniProtKB-KW"/>
</dbReference>
<dbReference type="GO" id="GO:0005840">
    <property type="term" value="C:ribosome"/>
    <property type="evidence" value="ECO:0007669"/>
    <property type="project" value="UniProtKB-KW"/>
</dbReference>
<dbReference type="GO" id="GO:0019843">
    <property type="term" value="F:rRNA binding"/>
    <property type="evidence" value="ECO:0007669"/>
    <property type="project" value="UniProtKB-UniRule"/>
</dbReference>
<dbReference type="GO" id="GO:0003735">
    <property type="term" value="F:structural constituent of ribosome"/>
    <property type="evidence" value="ECO:0007669"/>
    <property type="project" value="InterPro"/>
</dbReference>
<dbReference type="GO" id="GO:0006412">
    <property type="term" value="P:translation"/>
    <property type="evidence" value="ECO:0007669"/>
    <property type="project" value="UniProtKB-UniRule"/>
</dbReference>
<dbReference type="FunFam" id="3.30.420.80:FF:000001">
    <property type="entry name" value="30S ribosomal protein S11"/>
    <property type="match status" value="1"/>
</dbReference>
<dbReference type="Gene3D" id="3.30.420.80">
    <property type="entry name" value="Ribosomal protein S11"/>
    <property type="match status" value="1"/>
</dbReference>
<dbReference type="HAMAP" id="MF_01310">
    <property type="entry name" value="Ribosomal_uS11"/>
    <property type="match status" value="1"/>
</dbReference>
<dbReference type="InterPro" id="IPR001971">
    <property type="entry name" value="Ribosomal_uS11"/>
</dbReference>
<dbReference type="InterPro" id="IPR019981">
    <property type="entry name" value="Ribosomal_uS11_bac-type"/>
</dbReference>
<dbReference type="InterPro" id="IPR018102">
    <property type="entry name" value="Ribosomal_uS11_CS"/>
</dbReference>
<dbReference type="InterPro" id="IPR036967">
    <property type="entry name" value="Ribosomal_uS11_sf"/>
</dbReference>
<dbReference type="NCBIfam" id="NF003698">
    <property type="entry name" value="PRK05309.1"/>
    <property type="match status" value="1"/>
</dbReference>
<dbReference type="NCBIfam" id="TIGR03632">
    <property type="entry name" value="uS11_bact"/>
    <property type="match status" value="1"/>
</dbReference>
<dbReference type="PANTHER" id="PTHR11759">
    <property type="entry name" value="40S RIBOSOMAL PROTEIN S14/30S RIBOSOMAL PROTEIN S11"/>
    <property type="match status" value="1"/>
</dbReference>
<dbReference type="Pfam" id="PF00411">
    <property type="entry name" value="Ribosomal_S11"/>
    <property type="match status" value="1"/>
</dbReference>
<dbReference type="PIRSF" id="PIRSF002131">
    <property type="entry name" value="Ribosomal_S11"/>
    <property type="match status" value="1"/>
</dbReference>
<dbReference type="SUPFAM" id="SSF53137">
    <property type="entry name" value="Translational machinery components"/>
    <property type="match status" value="1"/>
</dbReference>
<dbReference type="PROSITE" id="PS00054">
    <property type="entry name" value="RIBOSOMAL_S11"/>
    <property type="match status" value="1"/>
</dbReference>
<sequence>MAREPQRIKRRERKNITSGIAHVNASFNNTMVTITDAQGNAISWSSAGMMGFKGSRKSTPYAAQVAADDAGKKAAEHGVRTLEVEVKGPGSGRESALRALQAVGFTITAIRDVTPIPHNGVRPSKRRRV</sequence>